<sequence length="140" mass="14498">MALLTVNLNVVSAEESLFSGSIKSLQITGSEGELGIMPGHAPLLTSLKPGMALITKADGTEEVIYLSGGMLEVQPNNVTVLADVATRAADLDEEAALAAKQRAEDNMNAHGGDVDYAAVAAELARAVAQLRVIQATSKHS</sequence>
<comment type="function">
    <text evidence="1">Produces ATP from ADP in the presence of a proton gradient across the membrane.</text>
</comment>
<comment type="subunit">
    <text>F-type ATPases have 2 components, CF(1) - the catalytic core - and CF(0) - the membrane proton channel. CF(1) has five subunits: alpha(3), beta(3), gamma(1), delta(1), epsilon(1). CF(0) has three main subunits: a, b and c.</text>
</comment>
<comment type="subcellular location">
    <subcellularLocation>
        <location evidence="1">Cell inner membrane</location>
        <topology evidence="1">Peripheral membrane protein</topology>
    </subcellularLocation>
</comment>
<comment type="similarity">
    <text evidence="1">Belongs to the ATPase epsilon chain family.</text>
</comment>
<gene>
    <name evidence="1" type="primary">atpC</name>
    <name type="ordered locus">CPS_0063</name>
</gene>
<feature type="chain" id="PRO_0000265803" description="ATP synthase epsilon chain">
    <location>
        <begin position="1"/>
        <end position="140"/>
    </location>
</feature>
<name>ATPE_COLP3</name>
<accession>Q48AV9</accession>
<dbReference type="EMBL" id="CP000083">
    <property type="protein sequence ID" value="AAZ24741.1"/>
    <property type="molecule type" value="Genomic_DNA"/>
</dbReference>
<dbReference type="RefSeq" id="WP_011040938.1">
    <property type="nucleotide sequence ID" value="NC_003910.7"/>
</dbReference>
<dbReference type="SMR" id="Q48AV9"/>
<dbReference type="STRING" id="167879.CPS_0063"/>
<dbReference type="KEGG" id="cps:CPS_0063"/>
<dbReference type="eggNOG" id="COG0355">
    <property type="taxonomic scope" value="Bacteria"/>
</dbReference>
<dbReference type="HOGENOM" id="CLU_084338_2_0_6"/>
<dbReference type="Proteomes" id="UP000000547">
    <property type="component" value="Chromosome"/>
</dbReference>
<dbReference type="GO" id="GO:0005886">
    <property type="term" value="C:plasma membrane"/>
    <property type="evidence" value="ECO:0007669"/>
    <property type="project" value="UniProtKB-SubCell"/>
</dbReference>
<dbReference type="GO" id="GO:0045259">
    <property type="term" value="C:proton-transporting ATP synthase complex"/>
    <property type="evidence" value="ECO:0007669"/>
    <property type="project" value="UniProtKB-KW"/>
</dbReference>
<dbReference type="GO" id="GO:0005524">
    <property type="term" value="F:ATP binding"/>
    <property type="evidence" value="ECO:0007669"/>
    <property type="project" value="UniProtKB-UniRule"/>
</dbReference>
<dbReference type="GO" id="GO:0046933">
    <property type="term" value="F:proton-transporting ATP synthase activity, rotational mechanism"/>
    <property type="evidence" value="ECO:0007669"/>
    <property type="project" value="UniProtKB-UniRule"/>
</dbReference>
<dbReference type="CDD" id="cd12152">
    <property type="entry name" value="F1-ATPase_delta"/>
    <property type="match status" value="1"/>
</dbReference>
<dbReference type="FunFam" id="1.20.5.440:FF:000001">
    <property type="entry name" value="ATP synthase epsilon chain"/>
    <property type="match status" value="1"/>
</dbReference>
<dbReference type="FunFam" id="2.60.15.10:FF:000001">
    <property type="entry name" value="ATP synthase epsilon chain"/>
    <property type="match status" value="1"/>
</dbReference>
<dbReference type="Gene3D" id="1.20.5.440">
    <property type="entry name" value="ATP synthase delta/epsilon subunit, C-terminal domain"/>
    <property type="match status" value="1"/>
</dbReference>
<dbReference type="Gene3D" id="2.60.15.10">
    <property type="entry name" value="F0F1 ATP synthase delta/epsilon subunit, N-terminal"/>
    <property type="match status" value="1"/>
</dbReference>
<dbReference type="HAMAP" id="MF_00530">
    <property type="entry name" value="ATP_synth_epsil_bac"/>
    <property type="match status" value="1"/>
</dbReference>
<dbReference type="InterPro" id="IPR036794">
    <property type="entry name" value="ATP_F1_dsu/esu_C_sf"/>
</dbReference>
<dbReference type="InterPro" id="IPR001469">
    <property type="entry name" value="ATP_synth_F1_dsu/esu"/>
</dbReference>
<dbReference type="InterPro" id="IPR020546">
    <property type="entry name" value="ATP_synth_F1_dsu/esu_N"/>
</dbReference>
<dbReference type="InterPro" id="IPR020547">
    <property type="entry name" value="ATP_synth_F1_esu_C"/>
</dbReference>
<dbReference type="InterPro" id="IPR036771">
    <property type="entry name" value="ATPsynth_dsu/esu_N"/>
</dbReference>
<dbReference type="NCBIfam" id="TIGR01216">
    <property type="entry name" value="ATP_synt_epsi"/>
    <property type="match status" value="1"/>
</dbReference>
<dbReference type="NCBIfam" id="NF001847">
    <property type="entry name" value="PRK00571.1-4"/>
    <property type="match status" value="1"/>
</dbReference>
<dbReference type="PANTHER" id="PTHR13822">
    <property type="entry name" value="ATP SYNTHASE DELTA/EPSILON CHAIN"/>
    <property type="match status" value="1"/>
</dbReference>
<dbReference type="PANTHER" id="PTHR13822:SF10">
    <property type="entry name" value="ATP SYNTHASE EPSILON CHAIN, CHLOROPLASTIC"/>
    <property type="match status" value="1"/>
</dbReference>
<dbReference type="Pfam" id="PF00401">
    <property type="entry name" value="ATP-synt_DE"/>
    <property type="match status" value="1"/>
</dbReference>
<dbReference type="Pfam" id="PF02823">
    <property type="entry name" value="ATP-synt_DE_N"/>
    <property type="match status" value="1"/>
</dbReference>
<dbReference type="SUPFAM" id="SSF46604">
    <property type="entry name" value="Epsilon subunit of F1F0-ATP synthase C-terminal domain"/>
    <property type="match status" value="1"/>
</dbReference>
<dbReference type="SUPFAM" id="SSF51344">
    <property type="entry name" value="Epsilon subunit of F1F0-ATP synthase N-terminal domain"/>
    <property type="match status" value="1"/>
</dbReference>
<reference key="1">
    <citation type="journal article" date="2005" name="Proc. Natl. Acad. Sci. U.S.A.">
        <title>The psychrophilic lifestyle as revealed by the genome sequence of Colwellia psychrerythraea 34H through genomic and proteomic analyses.</title>
        <authorList>
            <person name="Methe B.A."/>
            <person name="Nelson K.E."/>
            <person name="Deming J.W."/>
            <person name="Momen B."/>
            <person name="Melamud E."/>
            <person name="Zhang X."/>
            <person name="Moult J."/>
            <person name="Madupu R."/>
            <person name="Nelson W.C."/>
            <person name="Dodson R.J."/>
            <person name="Brinkac L.M."/>
            <person name="Daugherty S.C."/>
            <person name="Durkin A.S."/>
            <person name="DeBoy R.T."/>
            <person name="Kolonay J.F."/>
            <person name="Sullivan S.A."/>
            <person name="Zhou L."/>
            <person name="Davidsen T.M."/>
            <person name="Wu M."/>
            <person name="Huston A.L."/>
            <person name="Lewis M."/>
            <person name="Weaver B."/>
            <person name="Weidman J.F."/>
            <person name="Khouri H."/>
            <person name="Utterback T.R."/>
            <person name="Feldblyum T.V."/>
            <person name="Fraser C.M."/>
        </authorList>
    </citation>
    <scope>NUCLEOTIDE SEQUENCE [LARGE SCALE GENOMIC DNA]</scope>
    <source>
        <strain>34H / ATCC BAA-681</strain>
    </source>
</reference>
<evidence type="ECO:0000255" key="1">
    <source>
        <dbReference type="HAMAP-Rule" id="MF_00530"/>
    </source>
</evidence>
<protein>
    <recommendedName>
        <fullName evidence="1">ATP synthase epsilon chain</fullName>
    </recommendedName>
    <alternativeName>
        <fullName evidence="1">ATP synthase F1 sector epsilon subunit</fullName>
    </alternativeName>
    <alternativeName>
        <fullName evidence="1">F-ATPase epsilon subunit</fullName>
    </alternativeName>
</protein>
<proteinExistence type="inferred from homology"/>
<organism>
    <name type="scientific">Colwellia psychrerythraea (strain 34H / ATCC BAA-681)</name>
    <name type="common">Vibrio psychroerythus</name>
    <dbReference type="NCBI Taxonomy" id="167879"/>
    <lineage>
        <taxon>Bacteria</taxon>
        <taxon>Pseudomonadati</taxon>
        <taxon>Pseudomonadota</taxon>
        <taxon>Gammaproteobacteria</taxon>
        <taxon>Alteromonadales</taxon>
        <taxon>Colwelliaceae</taxon>
        <taxon>Colwellia</taxon>
    </lineage>
</organism>
<keyword id="KW-0066">ATP synthesis</keyword>
<keyword id="KW-0997">Cell inner membrane</keyword>
<keyword id="KW-1003">Cell membrane</keyword>
<keyword id="KW-0139">CF(1)</keyword>
<keyword id="KW-0375">Hydrogen ion transport</keyword>
<keyword id="KW-0406">Ion transport</keyword>
<keyword id="KW-0472">Membrane</keyword>
<keyword id="KW-0813">Transport</keyword>